<protein>
    <recommendedName>
        <fullName>Uncharacterized protein y4iC</fullName>
    </recommendedName>
</protein>
<name>Y4IC_SINFN</name>
<reference key="1">
    <citation type="journal article" date="1997" name="Nature">
        <title>Molecular basis of symbiosis between Rhizobium and legumes.</title>
        <authorList>
            <person name="Freiberg C.A."/>
            <person name="Fellay R."/>
            <person name="Bairoch A."/>
            <person name="Broughton W.J."/>
            <person name="Rosenthal A."/>
            <person name="Perret X."/>
        </authorList>
    </citation>
    <scope>NUCLEOTIDE SEQUENCE [LARGE SCALE GENOMIC DNA]</scope>
    <source>
        <strain>NBRC 101917 / NGR234</strain>
    </source>
</reference>
<reference key="2">
    <citation type="journal article" date="2009" name="Appl. Environ. Microbiol.">
        <title>Rhizobium sp. strain NGR234 possesses a remarkable number of secretion systems.</title>
        <authorList>
            <person name="Schmeisser C."/>
            <person name="Liesegang H."/>
            <person name="Krysciak D."/>
            <person name="Bakkou N."/>
            <person name="Le Quere A."/>
            <person name="Wollherr A."/>
            <person name="Heinemeyer I."/>
            <person name="Morgenstern B."/>
            <person name="Pommerening-Roeser A."/>
            <person name="Flores M."/>
            <person name="Palacios R."/>
            <person name="Brenner S."/>
            <person name="Gottschalk G."/>
            <person name="Schmitz R.A."/>
            <person name="Broughton W.J."/>
            <person name="Perret X."/>
            <person name="Strittmatter A.W."/>
            <person name="Streit W.R."/>
        </authorList>
    </citation>
    <scope>NUCLEOTIDE SEQUENCE [LARGE SCALE GENOMIC DNA]</scope>
    <source>
        <strain>NBRC 101917 / NGR234</strain>
    </source>
</reference>
<sequence>MYRERAFNAPARASGVDLLDAAAYGQQSNGDRRGEPRFGGDIERLIGTQTGKVRLLPGTTFVTEIAMRNKIPKKFLDTILLELRNVLCVRRRVHMAGIRLSKPASEIMIGQVIRALDGPLAPIHCASRSAFACDDCNDPVYRQSVLVICHRGKKLGYGVAAWLRNASRVELSDVSRRIIAQHQLRISQRPRAHQYCPASRRNHRNEIEMGGPLRFGIIVRLDRHTQSLVN</sequence>
<feature type="chain" id="PRO_0000200857" description="Uncharacterized protein y4iC">
    <location>
        <begin position="1"/>
        <end position="230"/>
    </location>
</feature>
<dbReference type="EMBL" id="U00090">
    <property type="protein sequence ID" value="AAB91698.1"/>
    <property type="molecule type" value="Genomic_DNA"/>
</dbReference>
<dbReference type="RefSeq" id="NP_443896.1">
    <property type="nucleotide sequence ID" value="NC_000914.2"/>
</dbReference>
<dbReference type="STRING" id="394.NGR_c25570"/>
<dbReference type="KEGG" id="rhi:NGR_a03300"/>
<dbReference type="eggNOG" id="COG1959">
    <property type="taxonomic scope" value="Bacteria"/>
</dbReference>
<dbReference type="HOGENOM" id="CLU_1204033_0_0_5"/>
<dbReference type="OrthoDB" id="9802344at2"/>
<dbReference type="Proteomes" id="UP000001054">
    <property type="component" value="Plasmid pNGR234a"/>
</dbReference>
<dbReference type="Gene3D" id="1.10.10.10">
    <property type="entry name" value="Winged helix-like DNA-binding domain superfamily/Winged helix DNA-binding domain"/>
    <property type="match status" value="1"/>
</dbReference>
<dbReference type="InterPro" id="IPR000944">
    <property type="entry name" value="Tscrpt_reg_Rrf2"/>
</dbReference>
<dbReference type="InterPro" id="IPR036388">
    <property type="entry name" value="WH-like_DNA-bd_sf"/>
</dbReference>
<dbReference type="InterPro" id="IPR036390">
    <property type="entry name" value="WH_DNA-bd_sf"/>
</dbReference>
<dbReference type="Pfam" id="PF02082">
    <property type="entry name" value="Rrf2"/>
    <property type="match status" value="1"/>
</dbReference>
<dbReference type="SUPFAM" id="SSF46785">
    <property type="entry name" value="Winged helix' DNA-binding domain"/>
    <property type="match status" value="1"/>
</dbReference>
<keyword id="KW-0614">Plasmid</keyword>
<keyword id="KW-1185">Reference proteome</keyword>
<accession>P55486</accession>
<proteinExistence type="predicted"/>
<gene>
    <name type="ordered locus">NGR_a03300</name>
    <name type="ORF">y4iC</name>
</gene>
<organism>
    <name type="scientific">Sinorhizobium fredii (strain NBRC 101917 / NGR234)</name>
    <dbReference type="NCBI Taxonomy" id="394"/>
    <lineage>
        <taxon>Bacteria</taxon>
        <taxon>Pseudomonadati</taxon>
        <taxon>Pseudomonadota</taxon>
        <taxon>Alphaproteobacteria</taxon>
        <taxon>Hyphomicrobiales</taxon>
        <taxon>Rhizobiaceae</taxon>
        <taxon>Sinorhizobium/Ensifer group</taxon>
        <taxon>Sinorhizobium</taxon>
    </lineage>
</organism>
<geneLocation type="plasmid">
    <name>sym pNGR234a</name>
</geneLocation>